<accession>P03563</accession>
<comment type="function">
    <text evidence="1">Increases viral DNA accumulation. Enhances infectivity and symptom expression (By similarity).</text>
</comment>
<comment type="subunit">
    <text evidence="1">Homooligomer. Interacts with the replication-associated protein (REP). Interacts with host proliferating cell nuclear antigen (PCNA). Interacts with host retinoblastoma-related protein 1 (RBR1), and may thereby deregulate the host cell cycle. Oligomerization and interaction with PCNA are necessary for optimal replication enhancement (By similarity).</text>
</comment>
<comment type="similarity">
    <text evidence="3">Belongs to the geminiviridae replication enhancer protein family.</text>
</comment>
<feature type="chain" id="PRO_0000222245" description="Replication enhancer protein">
    <location>
        <begin position="1"/>
        <end position="132"/>
    </location>
</feature>
<feature type="mutagenesis site" description="Severely reduced levels of viral DNA." evidence="2">
    <original>YFK</original>
    <variation>AAA</variation>
    <location>
        <begin position="28"/>
        <end position="30"/>
    </location>
</feature>
<feature type="mutagenesis site" description="No detectable levels of viral DNA." evidence="2">
    <original>QIRFNHN</original>
    <variation>AAAAAAA</variation>
    <location>
        <begin position="48"/>
        <end position="54"/>
    </location>
</feature>
<feature type="mutagenesis site" description="Severely reduced levels of viral DNA." evidence="2">
    <original>FLNFQVWTTS</original>
    <variation>ALNAARIAA</variation>
    <location>
        <begin position="65"/>
        <end position="74"/>
    </location>
</feature>
<feature type="mutagenesis site" description="Severely reduced levels of viral DNA." evidence="2">
    <original>NRFK</original>
    <variation>AAAA</variation>
    <location>
        <begin position="84"/>
        <end position="87"/>
    </location>
</feature>
<feature type="mutagenesis site" description="No detectable levels of viral DNA." evidence="2">
    <original>MLYLE</original>
    <variation>AAAAA</variation>
    <location>
        <begin position="91"/>
        <end position="95"/>
    </location>
</feature>
<sequence length="132" mass="15695">MDSRTGEPITVPQAENGVYIWEITNPLYFKIISVEDPLYTNTRIYHLQIRFNHNLRRALDLHKAFLNFQVWTTSTTASGRTYLNRFKYLVMLYLEQLGVICINNVIRAVRFATDRSYITHVLENHSIKYKFY</sequence>
<protein>
    <recommendedName>
        <fullName>Replication enhancer protein</fullName>
        <shortName>REn</shortName>
    </recommendedName>
    <alternativeName>
        <fullName>Protein AC3</fullName>
    </alternativeName>
    <alternativeName>
        <fullName>Protein AL3</fullName>
    </alternativeName>
</protein>
<proteinExistence type="evidence at protein level"/>
<name>REN_TGMVY</name>
<organismHost>
    <name type="scientific">Solanum lycopersicum</name>
    <name type="common">Tomato</name>
    <name type="synonym">Lycopersicon esculentum</name>
    <dbReference type="NCBI Taxonomy" id="4081"/>
</organismHost>
<reference key="1">
    <citation type="journal article" date="1984" name="EMBO J.">
        <title>Complete nucleotide sequence of the infectious cloned DNA components of tomato golden mosaic virus: potential coding regions and regulatory sequences.</title>
        <authorList>
            <person name="Hamilton W.D.O."/>
            <person name="Stein V.E."/>
            <person name="Coutts R.H.A."/>
            <person name="Buck K.W."/>
        </authorList>
    </citation>
    <scope>NUCLEOTIDE SEQUENCE [GENOMIC DNA]</scope>
</reference>
<reference key="2">
    <citation type="journal article" date="1994" name="Virology">
        <title>Molecular characterization of the AL3 protein encoded by a bipartite geminivirus.</title>
        <authorList>
            <person name="Pedersen T.J."/>
            <person name="Hanley-Bowdoin L."/>
        </authorList>
    </citation>
    <scope>IDENTIFICATION</scope>
</reference>
<reference key="3">
    <citation type="journal article" date="1996" name="J. Virol.">
        <title>Interactions between geminivirus replication proteins.</title>
        <authorList>
            <person name="Settlage S.B."/>
            <person name="Miller A.B."/>
            <person name="Hanley-Bowdoin L."/>
        </authorList>
    </citation>
    <scope>SUBUNIT</scope>
    <scope>INTERACTION WITH THE REPLICATION-ASSOCIATED PROTEIN</scope>
</reference>
<reference key="4">
    <citation type="journal article" date="2001" name="Virology">
        <title>Dual interaction of a geminivirus replication accessory factor with a viral replication protein and a plant cell cycle regulator.</title>
        <authorList>
            <person name="Settlage S.B."/>
            <person name="Miller A.B."/>
            <person name="Gruissem W."/>
            <person name="Hanley-Bowdoin L."/>
        </authorList>
    </citation>
    <scope>INTERACTION WITH THE REPLICATION-ASSOCIATED PROTEIN</scope>
    <scope>INTERACTION WITH ZEA MAYS RBR1</scope>
</reference>
<reference key="5">
    <citation type="journal article" date="2005" name="J. Virol.">
        <title>Geminivirus C3 protein: replication enhancement and protein interactions.</title>
        <authorList>
            <person name="Settlage S.B."/>
            <person name="See R.G."/>
            <person name="Hanley-Bowdoin L."/>
        </authorList>
    </citation>
    <scope>MUTAGENESIS OF 28-TYR--LYS-30; 48-GLN--ASN-54; 65-PHE--SER-74; 84-ASN--LYS-87 AND 91-MET--GLU-95</scope>
    <source>
        <strain>Isolate Dominican Republic</strain>
    </source>
</reference>
<keyword id="KW-0945">Host-virus interaction</keyword>
<keyword id="KW-1185">Reference proteome</keyword>
<dbReference type="EMBL" id="K02029">
    <property type="status" value="NOT_ANNOTATED_CDS"/>
    <property type="molecule type" value="Genomic_DNA"/>
</dbReference>
<dbReference type="PIR" id="A04166">
    <property type="entry name" value="QQCVL3"/>
</dbReference>
<dbReference type="Proteomes" id="UP000007405">
    <property type="component" value="Genome"/>
</dbReference>
<dbReference type="GO" id="GO:0039684">
    <property type="term" value="P:rolling circle single-stranded viral DNA replication"/>
    <property type="evidence" value="ECO:0000314"/>
    <property type="project" value="UniProtKB"/>
</dbReference>
<dbReference type="InterPro" id="IPR000657">
    <property type="entry name" value="Gemini_AL3"/>
</dbReference>
<dbReference type="Pfam" id="PF01407">
    <property type="entry name" value="Gemini_AL3"/>
    <property type="match status" value="1"/>
</dbReference>
<dbReference type="PRINTS" id="PR00231">
    <property type="entry name" value="GEMCOATAL3"/>
</dbReference>
<evidence type="ECO:0000250" key="1"/>
<evidence type="ECO:0000269" key="2">
    <source>
    </source>
</evidence>
<evidence type="ECO:0000305" key="3"/>
<organism>
    <name type="scientific">Tomato golden mosaic virus (strain Yellow vein)</name>
    <name type="common">TGMV</name>
    <dbReference type="NCBI Taxonomy" id="223341"/>
    <lineage>
        <taxon>Viruses</taxon>
        <taxon>Monodnaviria</taxon>
        <taxon>Shotokuvirae</taxon>
        <taxon>Cressdnaviricota</taxon>
        <taxon>Repensiviricetes</taxon>
        <taxon>Geplafuvirales</taxon>
        <taxon>Geminiviridae</taxon>
        <taxon>Begomovirus</taxon>
        <taxon>Tomato golden mosaic virus</taxon>
    </lineage>
</organism>
<gene>
    <name type="ORF">AC3</name>
    <name type="ORF">AL3</name>
</gene>